<protein>
    <recommendedName>
        <fullName>Uncharacterized protein YBR027C</fullName>
    </recommendedName>
</protein>
<sequence>MFKGSVSLYILCFALGLRNTFLIYNVCNNIKNNCMDNTSGPIGDTIFLIYGIIIIIGPRRCFFFYLKRVVLLQGTHEWCTQGLFPWLKKLEITNVHCHLRRFIICQLHLI</sequence>
<keyword id="KW-0472">Membrane</keyword>
<keyword id="KW-1185">Reference proteome</keyword>
<keyword id="KW-0812">Transmembrane</keyword>
<keyword id="KW-1133">Transmembrane helix</keyword>
<feature type="chain" id="PRO_0000202471" description="Uncharacterized protein YBR027C">
    <location>
        <begin position="1"/>
        <end position="110"/>
    </location>
</feature>
<feature type="transmembrane region" description="Helical" evidence="1">
    <location>
        <begin position="6"/>
        <end position="26"/>
    </location>
</feature>
<feature type="transmembrane region" description="Helical" evidence="1">
    <location>
        <begin position="38"/>
        <end position="58"/>
    </location>
</feature>
<comment type="subcellular location">
    <subcellularLocation>
        <location evidence="2">Membrane</location>
        <topology evidence="2">Multi-pass membrane protein</topology>
    </subcellularLocation>
</comment>
<organism>
    <name type="scientific">Saccharomyces cerevisiae (strain ATCC 204508 / S288c)</name>
    <name type="common">Baker's yeast</name>
    <dbReference type="NCBI Taxonomy" id="559292"/>
    <lineage>
        <taxon>Eukaryota</taxon>
        <taxon>Fungi</taxon>
        <taxon>Dikarya</taxon>
        <taxon>Ascomycota</taxon>
        <taxon>Saccharomycotina</taxon>
        <taxon>Saccharomycetes</taxon>
        <taxon>Saccharomycetales</taxon>
        <taxon>Saccharomycetaceae</taxon>
        <taxon>Saccharomyces</taxon>
    </lineage>
</organism>
<proteinExistence type="predicted"/>
<dbReference type="EMBL" id="Z35896">
    <property type="protein sequence ID" value="CAA84969.1"/>
    <property type="molecule type" value="Genomic_DNA"/>
</dbReference>
<dbReference type="EMBL" id="BK006936">
    <property type="protein sequence ID" value="DAA79923.1"/>
    <property type="molecule type" value="Genomic_DNA"/>
</dbReference>
<dbReference type="PIR" id="S45883">
    <property type="entry name" value="S45883"/>
</dbReference>
<dbReference type="RefSeq" id="NP_001333724.1">
    <property type="nucleotide sequence ID" value="NM_001346795.1"/>
</dbReference>
<dbReference type="DIP" id="DIP-4180N"/>
<dbReference type="FunCoup" id="P38220">
    <property type="interactions" value="15"/>
</dbReference>
<dbReference type="PaxDb" id="4932-YBR027C"/>
<dbReference type="EnsemblFungi" id="YBR027C_mRNA">
    <property type="protein sequence ID" value="YBR027C"/>
    <property type="gene ID" value="YBR027C"/>
</dbReference>
<dbReference type="GeneID" id="852315"/>
<dbReference type="KEGG" id="sce:YBR027C"/>
<dbReference type="AGR" id="SGD:S000000231"/>
<dbReference type="SGD" id="S000000231">
    <property type="gene designation" value="YBR027C"/>
</dbReference>
<dbReference type="HOGENOM" id="CLU_2173013_0_0_1"/>
<dbReference type="InParanoid" id="P38220"/>
<dbReference type="PRO" id="PR:P38220"/>
<dbReference type="Proteomes" id="UP000002311">
    <property type="component" value="Chromosome II"/>
</dbReference>
<dbReference type="RNAct" id="P38220">
    <property type="molecule type" value="protein"/>
</dbReference>
<dbReference type="GO" id="GO:0016020">
    <property type="term" value="C:membrane"/>
    <property type="evidence" value="ECO:0007669"/>
    <property type="project" value="UniProtKB-SubCell"/>
</dbReference>
<reference key="1">
    <citation type="journal article" date="1994" name="Yeast">
        <title>The complete sequence of a 33 kb fragment on the right arm of chromosome II from Saccharomyces cerevisiae reveals 16 open reading frames, including ten new open reading frames, five previously identified genes and a homologue of the SCO1 gene.</title>
        <authorList>
            <person name="Smits P.H.M."/>
            <person name="de Haan M."/>
            <person name="Maat C."/>
            <person name="Grivell L.A."/>
        </authorList>
    </citation>
    <scope>NUCLEOTIDE SEQUENCE [GENOMIC DNA]</scope>
    <source>
        <strain>ATCC 204508 / S288c</strain>
    </source>
</reference>
<reference key="2">
    <citation type="journal article" date="1994" name="EMBO J.">
        <title>Complete DNA sequence of yeast chromosome II.</title>
        <authorList>
            <person name="Feldmann H."/>
            <person name="Aigle M."/>
            <person name="Aljinovic G."/>
            <person name="Andre B."/>
            <person name="Baclet M.C."/>
            <person name="Barthe C."/>
            <person name="Baur A."/>
            <person name="Becam A.-M."/>
            <person name="Biteau N."/>
            <person name="Boles E."/>
            <person name="Brandt T."/>
            <person name="Brendel M."/>
            <person name="Brueckner M."/>
            <person name="Bussereau F."/>
            <person name="Christiansen C."/>
            <person name="Contreras R."/>
            <person name="Crouzet M."/>
            <person name="Cziepluch C."/>
            <person name="Demolis N."/>
            <person name="Delaveau T."/>
            <person name="Doignon F."/>
            <person name="Domdey H."/>
            <person name="Duesterhus S."/>
            <person name="Dubois E."/>
            <person name="Dujon B."/>
            <person name="El Bakkoury M."/>
            <person name="Entian K.-D."/>
            <person name="Feuermann M."/>
            <person name="Fiers W."/>
            <person name="Fobo G.M."/>
            <person name="Fritz C."/>
            <person name="Gassenhuber J."/>
            <person name="Glansdorff N."/>
            <person name="Goffeau A."/>
            <person name="Grivell L.A."/>
            <person name="de Haan M."/>
            <person name="Hein C."/>
            <person name="Herbert C.J."/>
            <person name="Hollenberg C.P."/>
            <person name="Holmstroem K."/>
            <person name="Jacq C."/>
            <person name="Jacquet M."/>
            <person name="Jauniaux J.-C."/>
            <person name="Jonniaux J.-L."/>
            <person name="Kallesoee T."/>
            <person name="Kiesau P."/>
            <person name="Kirchrath L."/>
            <person name="Koetter P."/>
            <person name="Korol S."/>
            <person name="Liebl S."/>
            <person name="Logghe M."/>
            <person name="Lohan A.J.E."/>
            <person name="Louis E.J."/>
            <person name="Li Z.Y."/>
            <person name="Maat M.J."/>
            <person name="Mallet L."/>
            <person name="Mannhaupt G."/>
            <person name="Messenguy F."/>
            <person name="Miosga T."/>
            <person name="Molemans F."/>
            <person name="Mueller S."/>
            <person name="Nasr F."/>
            <person name="Obermaier B."/>
            <person name="Perea J."/>
            <person name="Pierard A."/>
            <person name="Piravandi E."/>
            <person name="Pohl F.M."/>
            <person name="Pohl T.M."/>
            <person name="Potier S."/>
            <person name="Proft M."/>
            <person name="Purnelle B."/>
            <person name="Ramezani Rad M."/>
            <person name="Rieger M."/>
            <person name="Rose M."/>
            <person name="Schaaff-Gerstenschlaeger I."/>
            <person name="Scherens B."/>
            <person name="Schwarzlose C."/>
            <person name="Skala J."/>
            <person name="Slonimski P.P."/>
            <person name="Smits P.H.M."/>
            <person name="Souciet J.-L."/>
            <person name="Steensma H.Y."/>
            <person name="Stucka R."/>
            <person name="Urrestarazu L.A."/>
            <person name="van der Aart Q.J.M."/>
            <person name="Van Dyck L."/>
            <person name="Vassarotti A."/>
            <person name="Vetter I."/>
            <person name="Vierendeels F."/>
            <person name="Vissers S."/>
            <person name="Wagner G."/>
            <person name="de Wergifosse P."/>
            <person name="Wolfe K.H."/>
            <person name="Zagulski M."/>
            <person name="Zimmermann F.K."/>
            <person name="Mewes H.-W."/>
            <person name="Kleine K."/>
        </authorList>
    </citation>
    <scope>NUCLEOTIDE SEQUENCE [LARGE SCALE GENOMIC DNA]</scope>
    <source>
        <strain>ATCC 204508 / S288c</strain>
    </source>
</reference>
<reference key="3">
    <citation type="journal article" date="2014" name="G3 (Bethesda)">
        <title>The reference genome sequence of Saccharomyces cerevisiae: Then and now.</title>
        <authorList>
            <person name="Engel S.R."/>
            <person name="Dietrich F.S."/>
            <person name="Fisk D.G."/>
            <person name="Binkley G."/>
            <person name="Balakrishnan R."/>
            <person name="Costanzo M.C."/>
            <person name="Dwight S.S."/>
            <person name="Hitz B.C."/>
            <person name="Karra K."/>
            <person name="Nash R.S."/>
            <person name="Weng S."/>
            <person name="Wong E.D."/>
            <person name="Lloyd P."/>
            <person name="Skrzypek M.S."/>
            <person name="Miyasato S.R."/>
            <person name="Simison M."/>
            <person name="Cherry J.M."/>
        </authorList>
    </citation>
    <scope>GENOME REANNOTATION</scope>
    <source>
        <strain>ATCC 204508 / S288c</strain>
    </source>
</reference>
<name>YBN7_YEAST</name>
<gene>
    <name type="ordered locus">YBR027C</name>
    <name type="ORF">YBR0311</name>
</gene>
<evidence type="ECO:0000255" key="1"/>
<evidence type="ECO:0000305" key="2"/>
<accession>P38220</accession>
<accession>A0A1D0CT83</accession>